<name>GH109_STRCO</name>
<comment type="function">
    <text evidence="1 3">Glycosidase (By similarity). Has no alpha-N-acetylgalactosaminidase activity.</text>
</comment>
<comment type="cofactor">
    <cofactor evidence="1">
        <name>NAD(+)</name>
        <dbReference type="ChEBI" id="CHEBI:57540"/>
    </cofactor>
    <text evidence="1">Binds 1 NAD(+) per subunit. The NAD(+) cannot dissociate.</text>
</comment>
<comment type="PTM">
    <text>Predicted to be exported by the Tat system. The position of the signal peptide cleavage has not been experimentally proven.</text>
</comment>
<comment type="similarity">
    <text evidence="4">Belongs to the Gfo/Idh/MocA family. Glycosyl hydrolase 109 subfamily.</text>
</comment>
<evidence type="ECO:0000250" key="1"/>
<evidence type="ECO:0000255" key="2">
    <source>
        <dbReference type="PROSITE-ProRule" id="PRU00648"/>
    </source>
</evidence>
<evidence type="ECO:0000269" key="3">
    <source>
    </source>
</evidence>
<evidence type="ECO:0000305" key="4"/>
<reference key="1">
    <citation type="journal article" date="2007" name="Nat. Biotechnol.">
        <title>Bacterial glycosidases for the production of universal red blood cells.</title>
        <authorList>
            <person name="Liu Q.P."/>
            <person name="Sulzenbacher G."/>
            <person name="Yuan H."/>
            <person name="Bennett E.P."/>
            <person name="Pietz G."/>
            <person name="Saunders K."/>
            <person name="Spence J."/>
            <person name="Nudelman E."/>
            <person name="Levery S.B."/>
            <person name="White T."/>
            <person name="Neveu J.M."/>
            <person name="Lane W.S."/>
            <person name="Bourne Y."/>
            <person name="Olsson M.L."/>
            <person name="Henrissat B."/>
            <person name="Clausen H."/>
        </authorList>
    </citation>
    <scope>NUCLEOTIDE SEQUENCE [GENOMIC DNA]</scope>
    <scope>FUNCTION</scope>
    <source>
        <strain>ATCC 23899</strain>
    </source>
</reference>
<reference key="2">
    <citation type="journal article" date="2002" name="Nature">
        <title>Complete genome sequence of the model actinomycete Streptomyces coelicolor A3(2).</title>
        <authorList>
            <person name="Bentley S.D."/>
            <person name="Chater K.F."/>
            <person name="Cerdeno-Tarraga A.-M."/>
            <person name="Challis G.L."/>
            <person name="Thomson N.R."/>
            <person name="James K.D."/>
            <person name="Harris D.E."/>
            <person name="Quail M.A."/>
            <person name="Kieser H."/>
            <person name="Harper D."/>
            <person name="Bateman A."/>
            <person name="Brown S."/>
            <person name="Chandra G."/>
            <person name="Chen C.W."/>
            <person name="Collins M."/>
            <person name="Cronin A."/>
            <person name="Fraser A."/>
            <person name="Goble A."/>
            <person name="Hidalgo J."/>
            <person name="Hornsby T."/>
            <person name="Howarth S."/>
            <person name="Huang C.-H."/>
            <person name="Kieser T."/>
            <person name="Larke L."/>
            <person name="Murphy L.D."/>
            <person name="Oliver K."/>
            <person name="O'Neil S."/>
            <person name="Rabbinowitsch E."/>
            <person name="Rajandream M.A."/>
            <person name="Rutherford K.M."/>
            <person name="Rutter S."/>
            <person name="Seeger K."/>
            <person name="Saunders D."/>
            <person name="Sharp S."/>
            <person name="Squares R."/>
            <person name="Squares S."/>
            <person name="Taylor K."/>
            <person name="Warren T."/>
            <person name="Wietzorrek A."/>
            <person name="Woodward J.R."/>
            <person name="Barrell B.G."/>
            <person name="Parkhill J."/>
            <person name="Hopwood D.A."/>
        </authorList>
    </citation>
    <scope>NUCLEOTIDE SEQUENCE [LARGE SCALE GENOMIC DNA]</scope>
    <source>
        <strain>ATCC BAA-471 / A3(2) / M145</strain>
    </source>
</reference>
<organism>
    <name type="scientific">Streptomyces coelicolor (strain ATCC BAA-471 / A3(2) / M145)</name>
    <dbReference type="NCBI Taxonomy" id="100226"/>
    <lineage>
        <taxon>Bacteria</taxon>
        <taxon>Bacillati</taxon>
        <taxon>Actinomycetota</taxon>
        <taxon>Actinomycetes</taxon>
        <taxon>Kitasatosporales</taxon>
        <taxon>Streptomycetaceae</taxon>
        <taxon>Streptomyces</taxon>
        <taxon>Streptomyces albidoflavus group</taxon>
    </lineage>
</organism>
<gene>
    <name type="ordered locus">SCO0529</name>
    <name type="ORF">SCF11.09c</name>
</gene>
<feature type="signal peptide" description="Tat-type signal" evidence="2">
    <location>
        <begin position="1"/>
        <end position="35"/>
    </location>
</feature>
<feature type="chain" id="PRO_0000348565" description="Glycosyl hydrolase family 109 protein">
    <location>
        <begin position="36"/>
        <end position="472"/>
    </location>
</feature>
<feature type="binding site" evidence="1">
    <location>
        <begin position="68"/>
        <end position="69"/>
    </location>
    <ligand>
        <name>NAD(+)</name>
        <dbReference type="ChEBI" id="CHEBI:57540"/>
    </ligand>
</feature>
<feature type="binding site" evidence="1">
    <location>
        <position position="90"/>
    </location>
    <ligand>
        <name>NAD(+)</name>
        <dbReference type="ChEBI" id="CHEBI:57540"/>
    </ligand>
</feature>
<feature type="binding site" evidence="1">
    <location>
        <begin position="139"/>
        <end position="142"/>
    </location>
    <ligand>
        <name>NAD(+)</name>
        <dbReference type="ChEBI" id="CHEBI:57540"/>
    </ligand>
</feature>
<feature type="binding site" evidence="1">
    <location>
        <position position="145"/>
    </location>
    <ligand>
        <name>NAD(+)</name>
        <dbReference type="ChEBI" id="CHEBI:57540"/>
    </ligand>
</feature>
<feature type="binding site" evidence="1">
    <location>
        <begin position="159"/>
        <end position="160"/>
    </location>
    <ligand>
        <name>NAD(+)</name>
        <dbReference type="ChEBI" id="CHEBI:57540"/>
    </ligand>
</feature>
<feature type="binding site" evidence="1">
    <location>
        <position position="188"/>
    </location>
    <ligand>
        <name>NAD(+)</name>
        <dbReference type="ChEBI" id="CHEBI:57540"/>
    </ligand>
</feature>
<feature type="binding site" evidence="1">
    <location>
        <position position="217"/>
    </location>
    <ligand>
        <name>substrate</name>
    </ligand>
</feature>
<feature type="binding site" evidence="1">
    <location>
        <position position="236"/>
    </location>
    <ligand>
        <name>substrate</name>
    </ligand>
</feature>
<feature type="binding site" evidence="1">
    <location>
        <begin position="248"/>
        <end position="251"/>
    </location>
    <ligand>
        <name>substrate</name>
    </ligand>
</feature>
<feature type="binding site" evidence="1">
    <location>
        <position position="248"/>
    </location>
    <ligand>
        <name>NAD(+)</name>
        <dbReference type="ChEBI" id="CHEBI:57540"/>
    </ligand>
</feature>
<feature type="binding site" evidence="1">
    <location>
        <position position="330"/>
    </location>
    <ligand>
        <name>substrate</name>
    </ligand>
</feature>
<proteinExistence type="inferred from homology"/>
<keyword id="KW-0326">Glycosidase</keyword>
<keyword id="KW-0378">Hydrolase</keyword>
<keyword id="KW-0520">NAD</keyword>
<keyword id="KW-1185">Reference proteome</keyword>
<keyword id="KW-0732">Signal</keyword>
<dbReference type="EC" id="3.2.1.-"/>
<dbReference type="EMBL" id="AM039449">
    <property type="protein sequence ID" value="CAJ01381.1"/>
    <property type="molecule type" value="Genomic_DNA"/>
</dbReference>
<dbReference type="EMBL" id="AL939105">
    <property type="protein sequence ID" value="CAB59586.1"/>
    <property type="molecule type" value="Genomic_DNA"/>
</dbReference>
<dbReference type="RefSeq" id="NP_624843.1">
    <property type="nucleotide sequence ID" value="NC_003888.3"/>
</dbReference>
<dbReference type="RefSeq" id="WP_011027183.1">
    <property type="nucleotide sequence ID" value="NZ_VNID01000015.1"/>
</dbReference>
<dbReference type="SMR" id="Q9RK81"/>
<dbReference type="STRING" id="100226.gene:17758112"/>
<dbReference type="CAZy" id="GH109">
    <property type="family name" value="Glycoside Hydrolase Family 109"/>
</dbReference>
<dbReference type="PaxDb" id="100226-SCO0529"/>
<dbReference type="KEGG" id="sco:SCO0529"/>
<dbReference type="PATRIC" id="fig|100226.15.peg.509"/>
<dbReference type="eggNOG" id="COG0673">
    <property type="taxonomic scope" value="Bacteria"/>
</dbReference>
<dbReference type="HOGENOM" id="CLU_046965_0_0_11"/>
<dbReference type="InParanoid" id="Q9RK81"/>
<dbReference type="OrthoDB" id="9771072at2"/>
<dbReference type="PhylomeDB" id="Q9RK81"/>
<dbReference type="Proteomes" id="UP000001973">
    <property type="component" value="Chromosome"/>
</dbReference>
<dbReference type="GO" id="GO:0016798">
    <property type="term" value="F:hydrolase activity, acting on glycosyl bonds"/>
    <property type="evidence" value="ECO:0007669"/>
    <property type="project" value="UniProtKB-KW"/>
</dbReference>
<dbReference type="GO" id="GO:0000166">
    <property type="term" value="F:nucleotide binding"/>
    <property type="evidence" value="ECO:0007669"/>
    <property type="project" value="InterPro"/>
</dbReference>
<dbReference type="Gene3D" id="3.30.360.10">
    <property type="entry name" value="Dihydrodipicolinate Reductase, domain 2"/>
    <property type="match status" value="1"/>
</dbReference>
<dbReference type="Gene3D" id="3.40.50.720">
    <property type="entry name" value="NAD(P)-binding Rossmann-like Domain"/>
    <property type="match status" value="1"/>
</dbReference>
<dbReference type="InterPro" id="IPR000683">
    <property type="entry name" value="Gfo/Idh/MocA-like_OxRdtase_N"/>
</dbReference>
<dbReference type="InterPro" id="IPR050463">
    <property type="entry name" value="Gfo/Idh/MocA_oxidrdct_glycsds"/>
</dbReference>
<dbReference type="InterPro" id="IPR049303">
    <property type="entry name" value="Glyco_hydro_109_C"/>
</dbReference>
<dbReference type="InterPro" id="IPR036291">
    <property type="entry name" value="NAD(P)-bd_dom_sf"/>
</dbReference>
<dbReference type="InterPro" id="IPR006311">
    <property type="entry name" value="TAT_signal"/>
</dbReference>
<dbReference type="PANTHER" id="PTHR43818">
    <property type="entry name" value="BCDNA.GH03377"/>
    <property type="match status" value="1"/>
</dbReference>
<dbReference type="PANTHER" id="PTHR43818:SF1">
    <property type="entry name" value="GLYCOSYL HYDROLASE FAMILY 109 PROTEIN"/>
    <property type="match status" value="1"/>
</dbReference>
<dbReference type="Pfam" id="PF01408">
    <property type="entry name" value="GFO_IDH_MocA"/>
    <property type="match status" value="1"/>
</dbReference>
<dbReference type="Pfam" id="PF21252">
    <property type="entry name" value="Glyco_hydro_109_C"/>
    <property type="match status" value="1"/>
</dbReference>
<dbReference type="SUPFAM" id="SSF51735">
    <property type="entry name" value="NAD(P)-binding Rossmann-fold domains"/>
    <property type="match status" value="1"/>
</dbReference>
<dbReference type="PROSITE" id="PS51318">
    <property type="entry name" value="TAT"/>
    <property type="match status" value="1"/>
</dbReference>
<accession>Q9RK81</accession>
<protein>
    <recommendedName>
        <fullName>Glycosyl hydrolase family 109 protein</fullName>
        <ecNumber>3.2.1.-</ecNumber>
    </recommendedName>
</protein>
<sequence>MSQTPAVSRRLLLGSAAATGALATGIGSAAPVAAAEQAPRRRPGQKSMIGVPFAAHPTVRVAVIGLGNRGGGMITGWAAVPGCTVTAVCDIRADRAERAADRLESKGNPRPAEYGGSADSYARMLRRDDIDLVYIATPWEFHYEHGRAALLSGRHAVVELPVATELRQLWDLVDTSERTRRHLLLSENCNYGRNELAMLKAAHDGLFGDLTNGHGGYLHDLRELLFSDTYYTDSWRRLWHTRSTASFYPMHGLAPIAAAMDVNRGDRMTTLRATTTAPKGLADYRARFVPRDHPSWKETYINGDLVTCMIETAKGRTVRAEHDVSSPRPYSRINTLAGSRGIVEDYAGSAPTGARIYVEPDHGGHTWRDFETYRKEYDHWLWQKVGDDAANNGGHGGMDYVLQWRTVQLMRAGLVPDIDVYDSAAWCSPVPLSVTSLARGGRPVEIPDFTRGAWRERRPGLDSAPTDMPPAG</sequence>